<gene>
    <name evidence="1" type="primary">pdxS</name>
    <name type="ordered locus">Strop_1790</name>
</gene>
<comment type="function">
    <text evidence="1">Catalyzes the formation of pyridoxal 5'-phosphate from ribose 5-phosphate (RBP), glyceraldehyde 3-phosphate (G3P) and ammonia. The ammonia is provided by the PdxT subunit. Can also use ribulose 5-phosphate and dihydroxyacetone phosphate as substrates, resulting from enzyme-catalyzed isomerization of RBP and G3P, respectively.</text>
</comment>
<comment type="catalytic activity">
    <reaction evidence="1">
        <text>aldehydo-D-ribose 5-phosphate + D-glyceraldehyde 3-phosphate + L-glutamine = pyridoxal 5'-phosphate + L-glutamate + phosphate + 3 H2O + H(+)</text>
        <dbReference type="Rhea" id="RHEA:31507"/>
        <dbReference type="ChEBI" id="CHEBI:15377"/>
        <dbReference type="ChEBI" id="CHEBI:15378"/>
        <dbReference type="ChEBI" id="CHEBI:29985"/>
        <dbReference type="ChEBI" id="CHEBI:43474"/>
        <dbReference type="ChEBI" id="CHEBI:58273"/>
        <dbReference type="ChEBI" id="CHEBI:58359"/>
        <dbReference type="ChEBI" id="CHEBI:59776"/>
        <dbReference type="ChEBI" id="CHEBI:597326"/>
        <dbReference type="EC" id="4.3.3.6"/>
    </reaction>
</comment>
<comment type="pathway">
    <text evidence="1">Cofactor biosynthesis; pyridoxal 5'-phosphate biosynthesis.</text>
</comment>
<comment type="subunit">
    <text evidence="1">In the presence of PdxT, forms a dodecamer of heterodimers.</text>
</comment>
<comment type="similarity">
    <text evidence="1">Belongs to the PdxS/SNZ family.</text>
</comment>
<sequence>MPDSQTSNSSTNAPVTGTAHVKRGMAEMLKGGVIMDVVTAEQAKIAEDAGAVAVMALERVPSDIRAQGGVSRMSDPDMIDSIMDAVSIPVMAKVRIGHFVEAQILQSLGVDYVDESEVLTPADYANHVDKWAFTVPFVCGATNLGEALRRITEGAAMIRSKGEAGTGDVSNATTHMRGIRTEIRRLQSLPTDELYLAAKDLQAPYELVKEIAETGKLPVVLFTAGGIATPADAAMMMQLGAEGVFVGSGIFKSDNPAHRAAAIVKATTFHDDPETLAKISRGLGEAMVGINAGTLSQSDRLAERGR</sequence>
<proteinExistence type="inferred from homology"/>
<keyword id="KW-0456">Lyase</keyword>
<keyword id="KW-0663">Pyridoxal phosphate</keyword>
<keyword id="KW-1185">Reference proteome</keyword>
<keyword id="KW-0704">Schiff base</keyword>
<accession>A4X5V3</accession>
<evidence type="ECO:0000255" key="1">
    <source>
        <dbReference type="HAMAP-Rule" id="MF_01824"/>
    </source>
</evidence>
<feature type="chain" id="PRO_1000088410" description="Pyridoxal 5'-phosphate synthase subunit PdxS">
    <location>
        <begin position="1"/>
        <end position="306"/>
    </location>
</feature>
<feature type="active site" description="Schiff-base intermediate with D-ribose 5-phosphate" evidence="1">
    <location>
        <position position="93"/>
    </location>
</feature>
<feature type="binding site" evidence="1">
    <location>
        <position position="36"/>
    </location>
    <ligand>
        <name>D-ribose 5-phosphate</name>
        <dbReference type="ChEBI" id="CHEBI:78346"/>
    </ligand>
</feature>
<feature type="binding site" evidence="1">
    <location>
        <position position="165"/>
    </location>
    <ligand>
        <name>D-ribose 5-phosphate</name>
        <dbReference type="ChEBI" id="CHEBI:78346"/>
    </ligand>
</feature>
<feature type="binding site" evidence="1">
    <location>
        <position position="177"/>
    </location>
    <ligand>
        <name>D-glyceraldehyde 3-phosphate</name>
        <dbReference type="ChEBI" id="CHEBI:59776"/>
    </ligand>
</feature>
<feature type="binding site" evidence="1">
    <location>
        <position position="226"/>
    </location>
    <ligand>
        <name>D-ribose 5-phosphate</name>
        <dbReference type="ChEBI" id="CHEBI:78346"/>
    </ligand>
</feature>
<feature type="binding site" evidence="1">
    <location>
        <begin position="247"/>
        <end position="248"/>
    </location>
    <ligand>
        <name>D-ribose 5-phosphate</name>
        <dbReference type="ChEBI" id="CHEBI:78346"/>
    </ligand>
</feature>
<protein>
    <recommendedName>
        <fullName evidence="1">Pyridoxal 5'-phosphate synthase subunit PdxS</fullName>
        <shortName evidence="1">PLP synthase subunit PdxS</shortName>
        <ecNumber evidence="1">4.3.3.6</ecNumber>
    </recommendedName>
    <alternativeName>
        <fullName evidence="1">Pdx1</fullName>
    </alternativeName>
</protein>
<reference key="1">
    <citation type="journal article" date="2007" name="Proc. Natl. Acad. Sci. U.S.A.">
        <title>Genome sequencing reveals complex secondary metabolome in the marine actinomycete Salinispora tropica.</title>
        <authorList>
            <person name="Udwary D.W."/>
            <person name="Zeigler L."/>
            <person name="Asolkar R.N."/>
            <person name="Singan V."/>
            <person name="Lapidus A."/>
            <person name="Fenical W."/>
            <person name="Jensen P.R."/>
            <person name="Moore B.S."/>
        </authorList>
    </citation>
    <scope>NUCLEOTIDE SEQUENCE [LARGE SCALE GENOMIC DNA]</scope>
    <source>
        <strain>ATCC BAA-916 / DSM 44818 / JCM 13857 / NBRC 105044 / CNB-440</strain>
    </source>
</reference>
<organism>
    <name type="scientific">Salinispora tropica (strain ATCC BAA-916 / DSM 44818 / JCM 13857 / NBRC 105044 / CNB-440)</name>
    <dbReference type="NCBI Taxonomy" id="369723"/>
    <lineage>
        <taxon>Bacteria</taxon>
        <taxon>Bacillati</taxon>
        <taxon>Actinomycetota</taxon>
        <taxon>Actinomycetes</taxon>
        <taxon>Micromonosporales</taxon>
        <taxon>Micromonosporaceae</taxon>
        <taxon>Salinispora</taxon>
    </lineage>
</organism>
<dbReference type="EC" id="4.3.3.6" evidence="1"/>
<dbReference type="EMBL" id="CP000667">
    <property type="protein sequence ID" value="ABP54253.1"/>
    <property type="molecule type" value="Genomic_DNA"/>
</dbReference>
<dbReference type="RefSeq" id="WP_011905684.1">
    <property type="nucleotide sequence ID" value="NC_009380.1"/>
</dbReference>
<dbReference type="SMR" id="A4X5V3"/>
<dbReference type="STRING" id="369723.Strop_1790"/>
<dbReference type="KEGG" id="stp:Strop_1790"/>
<dbReference type="PATRIC" id="fig|369723.5.peg.1837"/>
<dbReference type="eggNOG" id="COG0214">
    <property type="taxonomic scope" value="Bacteria"/>
</dbReference>
<dbReference type="HOGENOM" id="CLU_055352_1_0_11"/>
<dbReference type="UniPathway" id="UPA00245"/>
<dbReference type="Proteomes" id="UP000000235">
    <property type="component" value="Chromosome"/>
</dbReference>
<dbReference type="GO" id="GO:0036381">
    <property type="term" value="F:pyridoxal 5'-phosphate synthase (glutamine hydrolysing) activity"/>
    <property type="evidence" value="ECO:0007669"/>
    <property type="project" value="UniProtKB-UniRule"/>
</dbReference>
<dbReference type="GO" id="GO:0006520">
    <property type="term" value="P:amino acid metabolic process"/>
    <property type="evidence" value="ECO:0007669"/>
    <property type="project" value="TreeGrafter"/>
</dbReference>
<dbReference type="GO" id="GO:0042823">
    <property type="term" value="P:pyridoxal phosphate biosynthetic process"/>
    <property type="evidence" value="ECO:0007669"/>
    <property type="project" value="UniProtKB-UniRule"/>
</dbReference>
<dbReference type="GO" id="GO:0008615">
    <property type="term" value="P:pyridoxine biosynthetic process"/>
    <property type="evidence" value="ECO:0007669"/>
    <property type="project" value="TreeGrafter"/>
</dbReference>
<dbReference type="CDD" id="cd04727">
    <property type="entry name" value="pdxS"/>
    <property type="match status" value="1"/>
</dbReference>
<dbReference type="FunFam" id="3.20.20.70:FF:000001">
    <property type="entry name" value="Pyridoxine biosynthesis protein PDX1"/>
    <property type="match status" value="1"/>
</dbReference>
<dbReference type="Gene3D" id="3.20.20.70">
    <property type="entry name" value="Aldolase class I"/>
    <property type="match status" value="1"/>
</dbReference>
<dbReference type="HAMAP" id="MF_01824">
    <property type="entry name" value="PdxS"/>
    <property type="match status" value="1"/>
</dbReference>
<dbReference type="InterPro" id="IPR013785">
    <property type="entry name" value="Aldolase_TIM"/>
</dbReference>
<dbReference type="InterPro" id="IPR001852">
    <property type="entry name" value="PdxS/SNZ"/>
</dbReference>
<dbReference type="InterPro" id="IPR033755">
    <property type="entry name" value="PdxS/SNZ_N"/>
</dbReference>
<dbReference type="InterPro" id="IPR011060">
    <property type="entry name" value="RibuloseP-bd_barrel"/>
</dbReference>
<dbReference type="NCBIfam" id="NF003215">
    <property type="entry name" value="PRK04180.1"/>
    <property type="match status" value="1"/>
</dbReference>
<dbReference type="NCBIfam" id="TIGR00343">
    <property type="entry name" value="pyridoxal 5'-phosphate synthase lyase subunit PdxS"/>
    <property type="match status" value="1"/>
</dbReference>
<dbReference type="PANTHER" id="PTHR31829">
    <property type="entry name" value="PYRIDOXAL 5'-PHOSPHATE SYNTHASE SUBUNIT SNZ1-RELATED"/>
    <property type="match status" value="1"/>
</dbReference>
<dbReference type="PANTHER" id="PTHR31829:SF0">
    <property type="entry name" value="PYRIDOXAL 5'-PHOSPHATE SYNTHASE SUBUNIT SNZ1-RELATED"/>
    <property type="match status" value="1"/>
</dbReference>
<dbReference type="Pfam" id="PF01680">
    <property type="entry name" value="SOR_SNZ"/>
    <property type="match status" value="1"/>
</dbReference>
<dbReference type="PIRSF" id="PIRSF029271">
    <property type="entry name" value="Pdx1"/>
    <property type="match status" value="1"/>
</dbReference>
<dbReference type="SUPFAM" id="SSF51366">
    <property type="entry name" value="Ribulose-phoshate binding barrel"/>
    <property type="match status" value="1"/>
</dbReference>
<dbReference type="PROSITE" id="PS01235">
    <property type="entry name" value="PDXS_SNZ_1"/>
    <property type="match status" value="1"/>
</dbReference>
<dbReference type="PROSITE" id="PS51129">
    <property type="entry name" value="PDXS_SNZ_2"/>
    <property type="match status" value="1"/>
</dbReference>
<name>PDXS_SALTO</name>